<evidence type="ECO:0000255" key="1">
    <source>
        <dbReference type="HAMAP-Rule" id="MF_01320"/>
    </source>
</evidence>
<evidence type="ECO:0000256" key="2">
    <source>
        <dbReference type="SAM" id="MobiDB-lite"/>
    </source>
</evidence>
<evidence type="ECO:0000305" key="3"/>
<comment type="function">
    <text evidence="1">One of the primary rRNA binding proteins. Required for association of the 30S and 50S subunits to form the 70S ribosome, for tRNA binding and peptide bond formation. It has been suggested to have peptidyltransferase activity; this is somewhat controversial. Makes several contacts with the 16S rRNA in the 70S ribosome.</text>
</comment>
<comment type="subunit">
    <text evidence="1">Part of the 50S ribosomal subunit. Forms a bridge to the 30S subunit in the 70S ribosome.</text>
</comment>
<comment type="similarity">
    <text evidence="1">Belongs to the universal ribosomal protein uL2 family.</text>
</comment>
<keyword id="KW-0687">Ribonucleoprotein</keyword>
<keyword id="KW-0689">Ribosomal protein</keyword>
<keyword id="KW-0694">RNA-binding</keyword>
<keyword id="KW-0699">rRNA-binding</keyword>
<accession>A5CUB0</accession>
<organism>
    <name type="scientific">Clavibacter michiganensis subsp. michiganensis (strain NCPPB 382)</name>
    <dbReference type="NCBI Taxonomy" id="443906"/>
    <lineage>
        <taxon>Bacteria</taxon>
        <taxon>Bacillati</taxon>
        <taxon>Actinomycetota</taxon>
        <taxon>Actinomycetes</taxon>
        <taxon>Micrococcales</taxon>
        <taxon>Microbacteriaceae</taxon>
        <taxon>Clavibacter</taxon>
    </lineage>
</organism>
<proteinExistence type="inferred from homology"/>
<reference key="1">
    <citation type="journal article" date="2008" name="J. Bacteriol.">
        <title>The genome sequence of the tomato-pathogenic actinomycete Clavibacter michiganensis subsp. michiganensis NCPPB382 reveals a large island involved in pathogenicity.</title>
        <authorList>
            <person name="Gartemann K.-H."/>
            <person name="Abt B."/>
            <person name="Bekel T."/>
            <person name="Burger A."/>
            <person name="Engemann J."/>
            <person name="Fluegel M."/>
            <person name="Gaigalat L."/>
            <person name="Goesmann A."/>
            <person name="Graefen I."/>
            <person name="Kalinowski J."/>
            <person name="Kaup O."/>
            <person name="Kirchner O."/>
            <person name="Krause L."/>
            <person name="Linke B."/>
            <person name="McHardy A."/>
            <person name="Meyer F."/>
            <person name="Pohle S."/>
            <person name="Rueckert C."/>
            <person name="Schneiker S."/>
            <person name="Zellermann E.-M."/>
            <person name="Puehler A."/>
            <person name="Eichenlaub R."/>
            <person name="Kaiser O."/>
            <person name="Bartels D."/>
        </authorList>
    </citation>
    <scope>NUCLEOTIDE SEQUENCE [LARGE SCALE GENOMIC DNA]</scope>
    <source>
        <strain>NCPPB 382</strain>
    </source>
</reference>
<gene>
    <name evidence="1" type="primary">rplB</name>
    <name type="ordered locus">CMM_2614</name>
</gene>
<sequence>MAIRKYKPTTPGRRGSSVADFAEITRSTPEKSLLRPLPKHGGRNNAGRITTRHIGGGHKRQYRVIDFKRNDKDGVLATVAHIEYDPNRTARIALLHFIDGSKRYIIAPNKLKQGDKIESGPQADIKPGNNLPLRNIPTGTVIHAIELRPGGGAKMGRSAGASVRLVAKDGPYAQLRLPSGEIRNVDARCRATIGEVGNAEQSNINWGKAGRMRWKGVRPTVRGVAMNPVDHPHGGGEGKTSGGRHPVSPWGQKEGRTRHINKPSDKLIVRRRNAGKKRK</sequence>
<name>RL2_CLAM3</name>
<dbReference type="EMBL" id="AM711867">
    <property type="protein sequence ID" value="CAN02697.1"/>
    <property type="molecule type" value="Genomic_DNA"/>
</dbReference>
<dbReference type="RefSeq" id="WP_012039303.1">
    <property type="nucleotide sequence ID" value="NC_009480.1"/>
</dbReference>
<dbReference type="SMR" id="A5CUB0"/>
<dbReference type="GeneID" id="92948617"/>
<dbReference type="KEGG" id="cmi:CMM_2614"/>
<dbReference type="eggNOG" id="COG0090">
    <property type="taxonomic scope" value="Bacteria"/>
</dbReference>
<dbReference type="HOGENOM" id="CLU_036235_2_1_11"/>
<dbReference type="OrthoDB" id="9778722at2"/>
<dbReference type="Proteomes" id="UP000001564">
    <property type="component" value="Chromosome"/>
</dbReference>
<dbReference type="GO" id="GO:0015934">
    <property type="term" value="C:large ribosomal subunit"/>
    <property type="evidence" value="ECO:0007669"/>
    <property type="project" value="InterPro"/>
</dbReference>
<dbReference type="GO" id="GO:0019843">
    <property type="term" value="F:rRNA binding"/>
    <property type="evidence" value="ECO:0007669"/>
    <property type="project" value="UniProtKB-UniRule"/>
</dbReference>
<dbReference type="GO" id="GO:0003735">
    <property type="term" value="F:structural constituent of ribosome"/>
    <property type="evidence" value="ECO:0007669"/>
    <property type="project" value="InterPro"/>
</dbReference>
<dbReference type="GO" id="GO:0016740">
    <property type="term" value="F:transferase activity"/>
    <property type="evidence" value="ECO:0007669"/>
    <property type="project" value="InterPro"/>
</dbReference>
<dbReference type="GO" id="GO:0002181">
    <property type="term" value="P:cytoplasmic translation"/>
    <property type="evidence" value="ECO:0007669"/>
    <property type="project" value="TreeGrafter"/>
</dbReference>
<dbReference type="FunFam" id="2.30.30.30:FF:000001">
    <property type="entry name" value="50S ribosomal protein L2"/>
    <property type="match status" value="1"/>
</dbReference>
<dbReference type="FunFam" id="2.40.50.140:FF:000003">
    <property type="entry name" value="50S ribosomal protein L2"/>
    <property type="match status" value="1"/>
</dbReference>
<dbReference type="FunFam" id="4.10.950.10:FF:000001">
    <property type="entry name" value="50S ribosomal protein L2"/>
    <property type="match status" value="1"/>
</dbReference>
<dbReference type="Gene3D" id="2.30.30.30">
    <property type="match status" value="1"/>
</dbReference>
<dbReference type="Gene3D" id="2.40.50.140">
    <property type="entry name" value="Nucleic acid-binding proteins"/>
    <property type="match status" value="1"/>
</dbReference>
<dbReference type="Gene3D" id="4.10.950.10">
    <property type="entry name" value="Ribosomal protein L2, domain 3"/>
    <property type="match status" value="1"/>
</dbReference>
<dbReference type="HAMAP" id="MF_01320_B">
    <property type="entry name" value="Ribosomal_uL2_B"/>
    <property type="match status" value="1"/>
</dbReference>
<dbReference type="InterPro" id="IPR012340">
    <property type="entry name" value="NA-bd_OB-fold"/>
</dbReference>
<dbReference type="InterPro" id="IPR014722">
    <property type="entry name" value="Rib_uL2_dom2"/>
</dbReference>
<dbReference type="InterPro" id="IPR002171">
    <property type="entry name" value="Ribosomal_uL2"/>
</dbReference>
<dbReference type="InterPro" id="IPR005880">
    <property type="entry name" value="Ribosomal_uL2_bac/org-type"/>
</dbReference>
<dbReference type="InterPro" id="IPR022669">
    <property type="entry name" value="Ribosomal_uL2_C"/>
</dbReference>
<dbReference type="InterPro" id="IPR022671">
    <property type="entry name" value="Ribosomal_uL2_CS"/>
</dbReference>
<dbReference type="InterPro" id="IPR014726">
    <property type="entry name" value="Ribosomal_uL2_dom3"/>
</dbReference>
<dbReference type="InterPro" id="IPR022666">
    <property type="entry name" value="Ribosomal_uL2_RNA-bd_dom"/>
</dbReference>
<dbReference type="InterPro" id="IPR008991">
    <property type="entry name" value="Translation_prot_SH3-like_sf"/>
</dbReference>
<dbReference type="NCBIfam" id="TIGR01171">
    <property type="entry name" value="rplB_bact"/>
    <property type="match status" value="1"/>
</dbReference>
<dbReference type="PANTHER" id="PTHR13691:SF5">
    <property type="entry name" value="LARGE RIBOSOMAL SUBUNIT PROTEIN UL2M"/>
    <property type="match status" value="1"/>
</dbReference>
<dbReference type="PANTHER" id="PTHR13691">
    <property type="entry name" value="RIBOSOMAL PROTEIN L2"/>
    <property type="match status" value="1"/>
</dbReference>
<dbReference type="Pfam" id="PF00181">
    <property type="entry name" value="Ribosomal_L2"/>
    <property type="match status" value="1"/>
</dbReference>
<dbReference type="Pfam" id="PF03947">
    <property type="entry name" value="Ribosomal_L2_C"/>
    <property type="match status" value="1"/>
</dbReference>
<dbReference type="PIRSF" id="PIRSF002158">
    <property type="entry name" value="Ribosomal_L2"/>
    <property type="match status" value="1"/>
</dbReference>
<dbReference type="SMART" id="SM01383">
    <property type="entry name" value="Ribosomal_L2"/>
    <property type="match status" value="1"/>
</dbReference>
<dbReference type="SMART" id="SM01382">
    <property type="entry name" value="Ribosomal_L2_C"/>
    <property type="match status" value="1"/>
</dbReference>
<dbReference type="SUPFAM" id="SSF50249">
    <property type="entry name" value="Nucleic acid-binding proteins"/>
    <property type="match status" value="1"/>
</dbReference>
<dbReference type="SUPFAM" id="SSF50104">
    <property type="entry name" value="Translation proteins SH3-like domain"/>
    <property type="match status" value="1"/>
</dbReference>
<dbReference type="PROSITE" id="PS00467">
    <property type="entry name" value="RIBOSOMAL_L2"/>
    <property type="match status" value="1"/>
</dbReference>
<feature type="chain" id="PRO_0000309897" description="Large ribosomal subunit protein uL2">
    <location>
        <begin position="1"/>
        <end position="279"/>
    </location>
</feature>
<feature type="region of interest" description="Disordered" evidence="2">
    <location>
        <begin position="32"/>
        <end position="53"/>
    </location>
</feature>
<feature type="region of interest" description="Disordered" evidence="2">
    <location>
        <begin position="225"/>
        <end position="279"/>
    </location>
</feature>
<feature type="compositionally biased region" description="Basic and acidic residues" evidence="2">
    <location>
        <begin position="253"/>
        <end position="268"/>
    </location>
</feature>
<feature type="compositionally biased region" description="Basic residues" evidence="2">
    <location>
        <begin position="269"/>
        <end position="279"/>
    </location>
</feature>
<protein>
    <recommendedName>
        <fullName evidence="1">Large ribosomal subunit protein uL2</fullName>
    </recommendedName>
    <alternativeName>
        <fullName evidence="3">50S ribosomal protein L2</fullName>
    </alternativeName>
</protein>